<sequence>MPTSPFIDDLIRDRRAKRGFLDQPVSIEMVKDILSAAKYAPSSSNTQPWRCYVITGEARERITTAAVEAYRAAPEGLPPEYPFFPQPLHEPYATRFNSFRGQLGDALGIPRSDITLRRRDVERQFRFFDAPVGLIFTMDRRLEWASFICYGCFLQNIMLAAKGRGLDTCTQVFWSMQHPVLRTELNLPDDQMVVAGMSLGWADNSLPENQMSISKMELEEFTTFVHE</sequence>
<comment type="function">
    <text evidence="2 3">Involved in the biodegradation of nitroaromatic compounds (PubMed:8368838). Catalyzes the two-electron reduction of nitrobenzene (NB) to produce a nitrosobenzene (NOB) intermediate, which is immediately reduced to hydroxylaminobenzene (HAB) by a second two-electron transfer (PubMed:7601851). Also active on menadione and nitrofurazone (PubMed:7601851). Replacing NADPH with NADH results in a 4-fold decrease in the reaction rate (PubMed:8368838).</text>
</comment>
<comment type="catalytic activity">
    <reaction evidence="2 3">
        <text>N-phenylhydroxylamine + 2 NADP(+) + H2O = nitrobenzene + 2 NADPH + 2 H(+)</text>
        <dbReference type="Rhea" id="RHEA:52884"/>
        <dbReference type="ChEBI" id="CHEBI:15377"/>
        <dbReference type="ChEBI" id="CHEBI:15378"/>
        <dbReference type="ChEBI" id="CHEBI:27798"/>
        <dbReference type="ChEBI" id="CHEBI:28902"/>
        <dbReference type="ChEBI" id="CHEBI:57783"/>
        <dbReference type="ChEBI" id="CHEBI:58349"/>
        <dbReference type="EC" id="1.7.1.16"/>
    </reaction>
</comment>
<comment type="cofactor">
    <cofactor evidence="2">
        <name>FMN</name>
        <dbReference type="ChEBI" id="CHEBI:58210"/>
    </cofactor>
    <text evidence="2">Binds 2 FMN per subunit.</text>
</comment>
<comment type="activity regulation">
    <text evidence="2">Inhibited by dicumarol, p-hydroxymercuribenzoate and salicyl hydroxamate.</text>
</comment>
<comment type="biophysicochemical properties">
    <kinetics>
        <KM evidence="2">5 uM for nitrobenzene</KM>
        <KM evidence="2">9 uM for menadione</KM>
        <KM evidence="2">64 uM for nitrofurazone</KM>
        <KM evidence="2">183 uM for NADPH</KM>
        <KM evidence="2">862 uM for 5-(aziridin-1-YL)-2,4-dinitrobenzamide</KM>
        <Vmax evidence="2">144.0 umol/min/mg enzyme with NADPH as substrate</Vmax>
        <Vmax evidence="2">92.0 umol/min/mg enzyme with nitrobenzene as substrate</Vmax>
        <Vmax evidence="2">12.0 umol/min/mg enzyme with menadione as substrate</Vmax>
    </kinetics>
    <phDependence>
        <text evidence="2">Optimum pH is 8.</text>
    </phDependence>
    <temperatureDependence>
        <text evidence="2">Stable at 40 degrees Celsius and below, but it loses activity rapidly at temperatures above 45 degrees Celsius.</text>
    </temperatureDependence>
</comment>
<comment type="pathway">
    <text evidence="6">Xenobiotic degradation; nitrobenzene degradation.</text>
</comment>
<comment type="subunit">
    <text evidence="2">Monomer.</text>
</comment>
<comment type="induction">
    <text evidence="3">By nitrobenzene.</text>
</comment>
<comment type="similarity">
    <text evidence="5">Belongs to the nitroreductase family.</text>
</comment>
<dbReference type="EC" id="1.7.1.16" evidence="2 3"/>
<dbReference type="EMBL" id="AY664495">
    <property type="protein sequence ID" value="AAT71308.1"/>
    <property type="molecule type" value="Genomic_DNA"/>
</dbReference>
<dbReference type="SMR" id="Q6DLR9"/>
<dbReference type="BRENDA" id="1.7.1.16">
    <property type="organism ID" value="5150"/>
</dbReference>
<dbReference type="UniPathway" id="UPA00923"/>
<dbReference type="GO" id="GO:0018546">
    <property type="term" value="F:nitrobenzene nitroreductase activity"/>
    <property type="evidence" value="ECO:0007669"/>
    <property type="project" value="UniProtKB-EC"/>
</dbReference>
<dbReference type="GO" id="GO:0000166">
    <property type="term" value="F:nucleotide binding"/>
    <property type="evidence" value="ECO:0007669"/>
    <property type="project" value="UniProtKB-KW"/>
</dbReference>
<dbReference type="GO" id="GO:0009056">
    <property type="term" value="P:catabolic process"/>
    <property type="evidence" value="ECO:0007669"/>
    <property type="project" value="UniProtKB-KW"/>
</dbReference>
<dbReference type="CDD" id="cd02136">
    <property type="entry name" value="PnbA_NfnB-like"/>
    <property type="match status" value="1"/>
</dbReference>
<dbReference type="Gene3D" id="3.40.109.10">
    <property type="entry name" value="NADH Oxidase"/>
    <property type="match status" value="1"/>
</dbReference>
<dbReference type="InterPro" id="IPR029479">
    <property type="entry name" value="Nitroreductase"/>
</dbReference>
<dbReference type="InterPro" id="IPR000415">
    <property type="entry name" value="Nitroreductase-like"/>
</dbReference>
<dbReference type="PANTHER" id="PTHR43673">
    <property type="entry name" value="NAD(P)H NITROREDUCTASE YDGI-RELATED"/>
    <property type="match status" value="1"/>
</dbReference>
<dbReference type="PANTHER" id="PTHR43673:SF2">
    <property type="entry name" value="NITROREDUCTASE"/>
    <property type="match status" value="1"/>
</dbReference>
<dbReference type="Pfam" id="PF00881">
    <property type="entry name" value="Nitroreductase"/>
    <property type="match status" value="1"/>
</dbReference>
<dbReference type="SUPFAM" id="SSF55469">
    <property type="entry name" value="FMN-dependent nitroreductase-like"/>
    <property type="match status" value="1"/>
</dbReference>
<proteinExistence type="evidence at protein level"/>
<name>NBZA_ECTOL</name>
<feature type="initiator methionine" description="Removed" evidence="2">
    <location>
        <position position="1"/>
    </location>
</feature>
<feature type="chain" id="PRO_0000441894" description="Nitrobenzene nitroreductase">
    <location>
        <begin position="2"/>
        <end position="227"/>
    </location>
</feature>
<feature type="binding site" evidence="1">
    <location>
        <begin position="14"/>
        <end position="18"/>
    </location>
    <ligand>
        <name>FMN</name>
        <dbReference type="ChEBI" id="CHEBI:58210"/>
    </ligand>
</feature>
<feature type="binding site" evidence="1">
    <location>
        <position position="44"/>
    </location>
    <ligand>
        <name>NADP(+)</name>
        <dbReference type="ChEBI" id="CHEBI:58349"/>
    </ligand>
</feature>
<feature type="binding site" evidence="1">
    <location>
        <position position="109"/>
    </location>
    <ligand>
        <name>NADP(+)</name>
        <dbReference type="ChEBI" id="CHEBI:58349"/>
    </ligand>
</feature>
<feature type="binding site" evidence="1">
    <location>
        <begin position="172"/>
        <end position="173"/>
    </location>
    <ligand>
        <name>FMN</name>
        <dbReference type="ChEBI" id="CHEBI:58210"/>
    </ligand>
</feature>
<feature type="binding site" evidence="1">
    <location>
        <position position="215"/>
    </location>
    <ligand>
        <name>FMN</name>
        <dbReference type="ChEBI" id="CHEBI:58210"/>
    </ligand>
</feature>
<gene>
    <name evidence="7" type="primary">nbzA</name>
</gene>
<keyword id="KW-0058">Aromatic hydrocarbons catabolism</keyword>
<keyword id="KW-0903">Direct protein sequencing</keyword>
<keyword id="KW-0285">Flavoprotein</keyword>
<keyword id="KW-0288">FMN</keyword>
<keyword id="KW-0521">NADP</keyword>
<keyword id="KW-0547">Nucleotide-binding</keyword>
<keyword id="KW-0560">Oxidoreductase</keyword>
<evidence type="ECO:0000250" key="1">
    <source>
        <dbReference type="UniProtKB" id="A0R6D0"/>
    </source>
</evidence>
<evidence type="ECO:0000269" key="2">
    <source>
    </source>
</evidence>
<evidence type="ECO:0000269" key="3">
    <source>
    </source>
</evidence>
<evidence type="ECO:0000303" key="4">
    <source>
    </source>
</evidence>
<evidence type="ECO:0000305" key="5"/>
<evidence type="ECO:0000305" key="6">
    <source>
    </source>
</evidence>
<evidence type="ECO:0000312" key="7">
    <source>
        <dbReference type="EMBL" id="AAT71308.1"/>
    </source>
</evidence>
<protein>
    <recommendedName>
        <fullName evidence="4">Nitrobenzene nitroreductase</fullName>
        <ecNumber evidence="2 3">1.7.1.16</ecNumber>
    </recommendedName>
    <alternativeName>
        <fullName evidence="4">Oxygen-insensitive nitroreductase</fullName>
    </alternativeName>
    <alternativeName>
        <fullName evidence="4">Type I nitroreductase</fullName>
    </alternativeName>
</protein>
<reference key="1">
    <citation type="submission" date="2004-06" db="EMBL/GenBank/DDBJ databases">
        <title>Cloning and sequencing the Pseudomonas pseudoalcaligenes JS45 gene for nitrobenzene nitroreductase.</title>
        <authorList>
            <person name="Chae J.-C."/>
            <person name="Zylstra G.J."/>
        </authorList>
    </citation>
    <scope>NUCLEOTIDE SEQUENCE [GENOMIC DNA]</scope>
    <source>
        <strain>JS45</strain>
    </source>
</reference>
<reference key="2">
    <citation type="journal article" date="1995" name="J. Bacteriol.">
        <title>Purification and characterization of nitrobenzene nitroreductase from Pseudomonas pseudoalcaligenes JS45.</title>
        <authorList>
            <person name="Somerville C.C."/>
            <person name="Nishino S.F."/>
            <person name="Spain J.C."/>
        </authorList>
    </citation>
    <scope>PROTEIN SEQUENCE OF 2-31</scope>
    <scope>FUNCTION</scope>
    <scope>CATALYTIC ACTIVITY</scope>
    <scope>BIOPHYSICOCHEMICAL PROPERTIES</scope>
    <scope>COFACTOR</scope>
    <scope>ACTIVITY REGULATION</scope>
    <scope>SUBUNIT</scope>
    <scope>SUBSTRATE SPECIFICITY</scope>
    <source>
        <strain>JS45</strain>
    </source>
</reference>
<reference key="3">
    <citation type="journal article" date="1993" name="Appl. Environ. Microbiol.">
        <title>Degradation of nitrobenzene by a Pseudomonas pseudoalcaligenes.</title>
        <authorList>
            <person name="Nishino S.F."/>
            <person name="Spain J.C."/>
        </authorList>
    </citation>
    <scope>FUNCTION</scope>
    <scope>CATALYTIC ACTIVITY</scope>
    <scope>INDUCTION</scope>
    <scope>SUBSTRATE SPECIFICITY</scope>
    <scope>PATHWAY</scope>
    <source>
        <strain>JS45</strain>
    </source>
</reference>
<accession>Q6DLR9</accession>
<organism>
    <name type="scientific">Ectopseudomonas oleovorans</name>
    <name type="common">Pseudomonas oleovorans</name>
    <dbReference type="NCBI Taxonomy" id="301"/>
    <lineage>
        <taxon>Bacteria</taxon>
        <taxon>Pseudomonadati</taxon>
        <taxon>Pseudomonadota</taxon>
        <taxon>Gammaproteobacteria</taxon>
        <taxon>Pseudomonadales</taxon>
        <taxon>Pseudomonadaceae</taxon>
        <taxon>Ectopseudomonas</taxon>
    </lineage>
</organism>